<dbReference type="EC" id="3.1.-.-" evidence="1"/>
<dbReference type="EMBL" id="CP001177">
    <property type="protein sequence ID" value="ACJ81845.1"/>
    <property type="molecule type" value="Genomic_DNA"/>
</dbReference>
<dbReference type="SMR" id="B7HYS8"/>
<dbReference type="KEGG" id="bcr:BCAH187_A1180"/>
<dbReference type="HOGENOM" id="CLU_056349_2_0_9"/>
<dbReference type="Proteomes" id="UP000002214">
    <property type="component" value="Chromosome"/>
</dbReference>
<dbReference type="GO" id="GO:0000175">
    <property type="term" value="F:3'-5'-RNA exonuclease activity"/>
    <property type="evidence" value="ECO:0007669"/>
    <property type="project" value="UniProtKB-UniRule"/>
</dbReference>
<dbReference type="GO" id="GO:0003676">
    <property type="term" value="F:nucleic acid binding"/>
    <property type="evidence" value="ECO:0007669"/>
    <property type="project" value="InterPro"/>
</dbReference>
<dbReference type="GO" id="GO:0031125">
    <property type="term" value="P:rRNA 3'-end processing"/>
    <property type="evidence" value="ECO:0007669"/>
    <property type="project" value="TreeGrafter"/>
</dbReference>
<dbReference type="CDD" id="cd00077">
    <property type="entry name" value="HDc"/>
    <property type="match status" value="1"/>
</dbReference>
<dbReference type="CDD" id="cd04492">
    <property type="entry name" value="YhaM_OBF_like"/>
    <property type="match status" value="1"/>
</dbReference>
<dbReference type="FunFam" id="1.10.3210.10:FF:000008">
    <property type="entry name" value="3'-5' exoribonuclease YhaM"/>
    <property type="match status" value="1"/>
</dbReference>
<dbReference type="Gene3D" id="1.10.3210.10">
    <property type="entry name" value="Hypothetical protein af1432"/>
    <property type="match status" value="1"/>
</dbReference>
<dbReference type="Gene3D" id="2.40.50.140">
    <property type="entry name" value="Nucleic acid-binding proteins"/>
    <property type="match status" value="1"/>
</dbReference>
<dbReference type="HAMAP" id="MF_01427">
    <property type="entry name" value="3_5_Exoribonuc_YhaM"/>
    <property type="match status" value="1"/>
</dbReference>
<dbReference type="InterPro" id="IPR020873">
    <property type="entry name" value="3'-5'_exoribonuclease_YhaM"/>
</dbReference>
<dbReference type="InterPro" id="IPR003607">
    <property type="entry name" value="HD/PDEase_dom"/>
</dbReference>
<dbReference type="InterPro" id="IPR006674">
    <property type="entry name" value="HD_domain"/>
</dbReference>
<dbReference type="InterPro" id="IPR012340">
    <property type="entry name" value="NA-bd_OB-fold"/>
</dbReference>
<dbReference type="InterPro" id="IPR004365">
    <property type="entry name" value="NA-bd_OB_tRNA"/>
</dbReference>
<dbReference type="InterPro" id="IPR050798">
    <property type="entry name" value="YhaM_exoribonuc/phosphodiest"/>
</dbReference>
<dbReference type="NCBIfam" id="NF010007">
    <property type="entry name" value="PRK13480.1"/>
    <property type="match status" value="1"/>
</dbReference>
<dbReference type="PANTHER" id="PTHR37294">
    <property type="entry name" value="3'-5' EXORIBONUCLEASE YHAM"/>
    <property type="match status" value="1"/>
</dbReference>
<dbReference type="PANTHER" id="PTHR37294:SF1">
    <property type="entry name" value="3'-5' EXORIBONUCLEASE YHAM"/>
    <property type="match status" value="1"/>
</dbReference>
<dbReference type="Pfam" id="PF01966">
    <property type="entry name" value="HD"/>
    <property type="match status" value="1"/>
</dbReference>
<dbReference type="Pfam" id="PF01336">
    <property type="entry name" value="tRNA_anti-codon"/>
    <property type="match status" value="1"/>
</dbReference>
<dbReference type="SMART" id="SM00471">
    <property type="entry name" value="HDc"/>
    <property type="match status" value="1"/>
</dbReference>
<dbReference type="SUPFAM" id="SSF109604">
    <property type="entry name" value="HD-domain/PDEase-like"/>
    <property type="match status" value="1"/>
</dbReference>
<dbReference type="SUPFAM" id="SSF50249">
    <property type="entry name" value="Nucleic acid-binding proteins"/>
    <property type="match status" value="1"/>
</dbReference>
<dbReference type="PROSITE" id="PS51831">
    <property type="entry name" value="HD"/>
    <property type="match status" value="1"/>
</dbReference>
<evidence type="ECO:0000255" key="1">
    <source>
        <dbReference type="HAMAP-Rule" id="MF_01427"/>
    </source>
</evidence>
<evidence type="ECO:0000255" key="2">
    <source>
        <dbReference type="PROSITE-ProRule" id="PRU01175"/>
    </source>
</evidence>
<accession>B7HYS8</accession>
<keyword id="KW-0269">Exonuclease</keyword>
<keyword id="KW-0378">Hydrolase</keyword>
<keyword id="KW-0540">Nuclease</keyword>
<feature type="chain" id="PRO_1000145737" description="3'-5' exoribonuclease YhaM">
    <location>
        <begin position="1"/>
        <end position="314"/>
    </location>
</feature>
<feature type="domain" description="HD" evidence="2">
    <location>
        <begin position="163"/>
        <end position="279"/>
    </location>
</feature>
<comment type="function">
    <text evidence="1">Shows a 3'-5' exoribonuclease activity.</text>
</comment>
<comment type="similarity">
    <text evidence="1">Belongs to the YhaM family.</text>
</comment>
<gene>
    <name evidence="1" type="primary">yhaM</name>
    <name type="ordered locus">BCAH187_A1180</name>
</gene>
<name>YHAM_BACC7</name>
<reference key="1">
    <citation type="submission" date="2008-10" db="EMBL/GenBank/DDBJ databases">
        <title>Genome sequence of Bacillus cereus AH187.</title>
        <authorList>
            <person name="Dodson R.J."/>
            <person name="Durkin A.S."/>
            <person name="Rosovitz M.J."/>
            <person name="Rasko D.A."/>
            <person name="Kolsto A.B."/>
            <person name="Okstad O.A."/>
            <person name="Ravel J."/>
            <person name="Sutton G."/>
        </authorList>
    </citation>
    <scope>NUCLEOTIDE SEQUENCE [LARGE SCALE GENOMIC DNA]</scope>
    <source>
        <strain>AH187</strain>
    </source>
</reference>
<sequence length="314" mass="35501">MKKKIAEYEVGEQVDIFLLIKTATKGIASNGKPFLTVILQDPSGDIEAKLWDVSPEVEKQYVAETIVKVAGDILNYKGRIQLRVKQIRVANENEVTDISDFVEKAPVKKEDMVEKITQYIFEMRNPNIQRLTRHLLNKHQTEFLDYPAATKNHHEFVSGLAYHVVSMLDLAKAISNLYPSLDKDLLYAGVILHDLGKVIELSGPISTTYTLEGNLLGHISIMVNEIGKAADELQIDAEEVLILQHIVLSHHGKAEWGSPKPPLVKEAEILHYIDNLDAKMNMMDRALGRTKPGEYTERVFALDNRSFYKPSFHN</sequence>
<protein>
    <recommendedName>
        <fullName evidence="1">3'-5' exoribonuclease YhaM</fullName>
        <ecNumber evidence="1">3.1.-.-</ecNumber>
    </recommendedName>
</protein>
<organism>
    <name type="scientific">Bacillus cereus (strain AH187)</name>
    <dbReference type="NCBI Taxonomy" id="405534"/>
    <lineage>
        <taxon>Bacteria</taxon>
        <taxon>Bacillati</taxon>
        <taxon>Bacillota</taxon>
        <taxon>Bacilli</taxon>
        <taxon>Bacillales</taxon>
        <taxon>Bacillaceae</taxon>
        <taxon>Bacillus</taxon>
        <taxon>Bacillus cereus group</taxon>
    </lineage>
</organism>
<proteinExistence type="inferred from homology"/>